<name>PSBH_PROM4</name>
<comment type="function">
    <text evidence="1">One of the components of the core complex of photosystem II (PSII), required for its stability and/or assembly. PSII is a light-driven water:plastoquinone oxidoreductase that uses light energy to abstract electrons from H(2)O, generating O(2) and a proton gradient subsequently used for ATP formation. It consists of a core antenna complex that captures photons, and an electron transfer chain that converts photonic excitation into a charge separation.</text>
</comment>
<comment type="subunit">
    <text evidence="2">PSII is composed of 1 copy each of membrane proteins PsbA, PsbB, PsbC, PsbD, PsbE, PsbF, PsbH, PsbI, PsbJ, PsbK, PsbL, PsbM, PsbT, PsbX, PsbY, Psb30/Ycf12, peripheral proteins PsbO, CyanoQ (PsbQ), PsbU, PsbV and a large number of cofactors. It forms dimeric complexes.</text>
</comment>
<comment type="subcellular location">
    <subcellularLocation>
        <location evidence="1">Cellular thylakoid membrane</location>
        <topology evidence="1">Single-pass membrane protein</topology>
    </subcellularLocation>
</comment>
<comment type="similarity">
    <text evidence="1">Belongs to the PsbH family.</text>
</comment>
<dbReference type="EMBL" id="CP000878">
    <property type="protein sequence ID" value="ABX08208.1"/>
    <property type="molecule type" value="Genomic_DNA"/>
</dbReference>
<dbReference type="RefSeq" id="WP_012194833.1">
    <property type="nucleotide sequence ID" value="NC_009976.1"/>
</dbReference>
<dbReference type="SMR" id="A9BDM2"/>
<dbReference type="STRING" id="93059.P9211_02771"/>
<dbReference type="KEGG" id="pmj:P9211_02771"/>
<dbReference type="eggNOG" id="ENOG50332MV">
    <property type="taxonomic scope" value="Bacteria"/>
</dbReference>
<dbReference type="HOGENOM" id="CLU_190203_0_0_3"/>
<dbReference type="OrthoDB" id="427121at2"/>
<dbReference type="Proteomes" id="UP000000788">
    <property type="component" value="Chromosome"/>
</dbReference>
<dbReference type="GO" id="GO:0009523">
    <property type="term" value="C:photosystem II"/>
    <property type="evidence" value="ECO:0007669"/>
    <property type="project" value="UniProtKB-KW"/>
</dbReference>
<dbReference type="GO" id="GO:0031676">
    <property type="term" value="C:plasma membrane-derived thylakoid membrane"/>
    <property type="evidence" value="ECO:0007669"/>
    <property type="project" value="UniProtKB-SubCell"/>
</dbReference>
<dbReference type="GO" id="GO:0042301">
    <property type="term" value="F:phosphate ion binding"/>
    <property type="evidence" value="ECO:0007669"/>
    <property type="project" value="InterPro"/>
</dbReference>
<dbReference type="GO" id="GO:0015979">
    <property type="term" value="P:photosynthesis"/>
    <property type="evidence" value="ECO:0007669"/>
    <property type="project" value="UniProtKB-UniRule"/>
</dbReference>
<dbReference type="GO" id="GO:0050821">
    <property type="term" value="P:protein stabilization"/>
    <property type="evidence" value="ECO:0007669"/>
    <property type="project" value="InterPro"/>
</dbReference>
<dbReference type="Gene3D" id="1.20.5.880">
    <property type="entry name" value="Photosystem II reaction center protein H"/>
    <property type="match status" value="1"/>
</dbReference>
<dbReference type="HAMAP" id="MF_00752">
    <property type="entry name" value="PSII_PsbH"/>
    <property type="match status" value="1"/>
</dbReference>
<dbReference type="InterPro" id="IPR001056">
    <property type="entry name" value="PSII_PsbH"/>
</dbReference>
<dbReference type="InterPro" id="IPR036863">
    <property type="entry name" value="PSII_PsbH_sf"/>
</dbReference>
<dbReference type="NCBIfam" id="NF002728">
    <property type="entry name" value="PRK02624.1"/>
    <property type="match status" value="1"/>
</dbReference>
<dbReference type="PANTHER" id="PTHR34469">
    <property type="entry name" value="PHOTOSYSTEM II REACTION CENTER PROTEIN H"/>
    <property type="match status" value="1"/>
</dbReference>
<dbReference type="PANTHER" id="PTHR34469:SF4">
    <property type="entry name" value="PHOTOSYSTEM II REACTION CENTER PROTEIN H"/>
    <property type="match status" value="1"/>
</dbReference>
<dbReference type="Pfam" id="PF00737">
    <property type="entry name" value="PsbH"/>
    <property type="match status" value="1"/>
</dbReference>
<dbReference type="SUPFAM" id="SSF161025">
    <property type="entry name" value="Photosystem II 10 kDa phosphoprotein PsbH"/>
    <property type="match status" value="1"/>
</dbReference>
<keyword id="KW-0472">Membrane</keyword>
<keyword id="KW-0602">Photosynthesis</keyword>
<keyword id="KW-0604">Photosystem II</keyword>
<keyword id="KW-1185">Reference proteome</keyword>
<keyword id="KW-0793">Thylakoid</keyword>
<keyword id="KW-0812">Transmembrane</keyword>
<keyword id="KW-1133">Transmembrane helix</keyword>
<proteinExistence type="inferred from homology"/>
<protein>
    <recommendedName>
        <fullName evidence="1">Photosystem II reaction center protein H</fullName>
        <shortName evidence="1">PSII-H</shortName>
    </recommendedName>
</protein>
<sequence length="67" mass="7059">MGQKTALGSLLKSIGNSGQGKVVAGWGAVPVMAFIGVLLLVFLVILLQIYNQSLLLQGFSVDWNGVK</sequence>
<organism>
    <name type="scientific">Prochlorococcus marinus (strain MIT 9211)</name>
    <dbReference type="NCBI Taxonomy" id="93059"/>
    <lineage>
        <taxon>Bacteria</taxon>
        <taxon>Bacillati</taxon>
        <taxon>Cyanobacteriota</taxon>
        <taxon>Cyanophyceae</taxon>
        <taxon>Synechococcales</taxon>
        <taxon>Prochlorococcaceae</taxon>
        <taxon>Prochlorococcus</taxon>
    </lineage>
</organism>
<accession>A9BDM2</accession>
<reference key="1">
    <citation type="journal article" date="2007" name="PLoS Genet.">
        <title>Patterns and implications of gene gain and loss in the evolution of Prochlorococcus.</title>
        <authorList>
            <person name="Kettler G.C."/>
            <person name="Martiny A.C."/>
            <person name="Huang K."/>
            <person name="Zucker J."/>
            <person name="Coleman M.L."/>
            <person name="Rodrigue S."/>
            <person name="Chen F."/>
            <person name="Lapidus A."/>
            <person name="Ferriera S."/>
            <person name="Johnson J."/>
            <person name="Steglich C."/>
            <person name="Church G.M."/>
            <person name="Richardson P."/>
            <person name="Chisholm S.W."/>
        </authorList>
    </citation>
    <scope>NUCLEOTIDE SEQUENCE [LARGE SCALE GENOMIC DNA]</scope>
    <source>
        <strain>MIT 9211</strain>
    </source>
</reference>
<evidence type="ECO:0000255" key="1">
    <source>
        <dbReference type="HAMAP-Rule" id="MF_00752"/>
    </source>
</evidence>
<evidence type="ECO:0000305" key="2"/>
<feature type="chain" id="PRO_1000192873" description="Photosystem II reaction center protein H">
    <location>
        <begin position="1"/>
        <end position="67"/>
    </location>
</feature>
<feature type="transmembrane region" description="Helical" evidence="1">
    <location>
        <begin position="27"/>
        <end position="47"/>
    </location>
</feature>
<gene>
    <name evidence="1" type="primary">psbH</name>
    <name type="ordered locus">P9211_02771</name>
</gene>